<accession>B7HL54</accession>
<name>PANC_BACC7</name>
<evidence type="ECO:0000255" key="1">
    <source>
        <dbReference type="HAMAP-Rule" id="MF_00158"/>
    </source>
</evidence>
<keyword id="KW-0067">ATP-binding</keyword>
<keyword id="KW-0963">Cytoplasm</keyword>
<keyword id="KW-0436">Ligase</keyword>
<keyword id="KW-0547">Nucleotide-binding</keyword>
<keyword id="KW-0566">Pantothenate biosynthesis</keyword>
<sequence length="282" mass="31981">MKIINTVQEMQQITNELRASGKSIGFVPTMGYLHEGHATLLRKAREENEIVVLSVFVNPLQFGPNEDLDRYPRDIDRDENVAKENSVDYLFYPSVEEMYPAEQTTTVEVVKRTDVLCGKQRPGHFAGVAIVLMKLFNITLPTRAYFGMKDAQQVAVIEGFVADFNIPVTIVPVDIVREEDGLAKSSRNVYLSPEEREEALHLYRSLCIAKERIETGERNAEIITTLVKEYIETYTKGTVDYADLYAYPSLQVVDKIEGRIILAIAVKFDNVRLIDNITLTVK</sequence>
<reference key="1">
    <citation type="submission" date="2008-10" db="EMBL/GenBank/DDBJ databases">
        <title>Genome sequence of Bacillus cereus AH187.</title>
        <authorList>
            <person name="Dodson R.J."/>
            <person name="Durkin A.S."/>
            <person name="Rosovitz M.J."/>
            <person name="Rasko D.A."/>
            <person name="Kolsto A.B."/>
            <person name="Okstad O.A."/>
            <person name="Ravel J."/>
            <person name="Sutton G."/>
        </authorList>
    </citation>
    <scope>NUCLEOTIDE SEQUENCE [LARGE SCALE GENOMIC DNA]</scope>
    <source>
        <strain>AH187</strain>
    </source>
</reference>
<protein>
    <recommendedName>
        <fullName evidence="1">Pantothenate synthetase</fullName>
        <shortName evidence="1">PS</shortName>
        <ecNumber evidence="1">6.3.2.1</ecNumber>
    </recommendedName>
    <alternativeName>
        <fullName evidence="1">Pantoate--beta-alanine ligase</fullName>
    </alternativeName>
    <alternativeName>
        <fullName evidence="1">Pantoate-activating enzyme</fullName>
    </alternativeName>
</protein>
<proteinExistence type="inferred from homology"/>
<organism>
    <name type="scientific">Bacillus cereus (strain AH187)</name>
    <dbReference type="NCBI Taxonomy" id="405534"/>
    <lineage>
        <taxon>Bacteria</taxon>
        <taxon>Bacillati</taxon>
        <taxon>Bacillota</taxon>
        <taxon>Bacilli</taxon>
        <taxon>Bacillales</taxon>
        <taxon>Bacillaceae</taxon>
        <taxon>Bacillus</taxon>
        <taxon>Bacillus cereus group</taxon>
    </lineage>
</organism>
<gene>
    <name evidence="1" type="primary">panC</name>
    <name type="ordered locus">BCAH187_A1707</name>
</gene>
<feature type="chain" id="PRO_1000118143" description="Pantothenate synthetase">
    <location>
        <begin position="1"/>
        <end position="282"/>
    </location>
</feature>
<feature type="active site" description="Proton donor" evidence="1">
    <location>
        <position position="37"/>
    </location>
</feature>
<feature type="binding site" evidence="1">
    <location>
        <begin position="30"/>
        <end position="37"/>
    </location>
    <ligand>
        <name>ATP</name>
        <dbReference type="ChEBI" id="CHEBI:30616"/>
    </ligand>
</feature>
<feature type="binding site" evidence="1">
    <location>
        <position position="61"/>
    </location>
    <ligand>
        <name>(R)-pantoate</name>
        <dbReference type="ChEBI" id="CHEBI:15980"/>
    </ligand>
</feature>
<feature type="binding site" evidence="1">
    <location>
        <position position="61"/>
    </location>
    <ligand>
        <name>beta-alanine</name>
        <dbReference type="ChEBI" id="CHEBI:57966"/>
    </ligand>
</feature>
<feature type="binding site" evidence="1">
    <location>
        <begin position="147"/>
        <end position="150"/>
    </location>
    <ligand>
        <name>ATP</name>
        <dbReference type="ChEBI" id="CHEBI:30616"/>
    </ligand>
</feature>
<feature type="binding site" evidence="1">
    <location>
        <position position="153"/>
    </location>
    <ligand>
        <name>(R)-pantoate</name>
        <dbReference type="ChEBI" id="CHEBI:15980"/>
    </ligand>
</feature>
<feature type="binding site" evidence="1">
    <location>
        <position position="176"/>
    </location>
    <ligand>
        <name>ATP</name>
        <dbReference type="ChEBI" id="CHEBI:30616"/>
    </ligand>
</feature>
<feature type="binding site" evidence="1">
    <location>
        <begin position="184"/>
        <end position="187"/>
    </location>
    <ligand>
        <name>ATP</name>
        <dbReference type="ChEBI" id="CHEBI:30616"/>
    </ligand>
</feature>
<comment type="function">
    <text evidence="1">Catalyzes the condensation of pantoate with beta-alanine in an ATP-dependent reaction via a pantoyl-adenylate intermediate.</text>
</comment>
<comment type="catalytic activity">
    <reaction evidence="1">
        <text>(R)-pantoate + beta-alanine + ATP = (R)-pantothenate + AMP + diphosphate + H(+)</text>
        <dbReference type="Rhea" id="RHEA:10912"/>
        <dbReference type="ChEBI" id="CHEBI:15378"/>
        <dbReference type="ChEBI" id="CHEBI:15980"/>
        <dbReference type="ChEBI" id="CHEBI:29032"/>
        <dbReference type="ChEBI" id="CHEBI:30616"/>
        <dbReference type="ChEBI" id="CHEBI:33019"/>
        <dbReference type="ChEBI" id="CHEBI:57966"/>
        <dbReference type="ChEBI" id="CHEBI:456215"/>
        <dbReference type="EC" id="6.3.2.1"/>
    </reaction>
</comment>
<comment type="pathway">
    <text evidence="1">Cofactor biosynthesis; (R)-pantothenate biosynthesis; (R)-pantothenate from (R)-pantoate and beta-alanine: step 1/1.</text>
</comment>
<comment type="subunit">
    <text evidence="1">Homodimer.</text>
</comment>
<comment type="subcellular location">
    <subcellularLocation>
        <location evidence="1">Cytoplasm</location>
    </subcellularLocation>
</comment>
<comment type="miscellaneous">
    <text evidence="1">The reaction proceeds by a bi uni uni bi ping pong mechanism.</text>
</comment>
<comment type="similarity">
    <text evidence="1">Belongs to the pantothenate synthetase family.</text>
</comment>
<dbReference type="EC" id="6.3.2.1" evidence="1"/>
<dbReference type="EMBL" id="CP001177">
    <property type="protein sequence ID" value="ACJ77754.1"/>
    <property type="molecule type" value="Genomic_DNA"/>
</dbReference>
<dbReference type="SMR" id="B7HL54"/>
<dbReference type="KEGG" id="bcr:BCAH187_A1707"/>
<dbReference type="HOGENOM" id="CLU_047148_0_0_9"/>
<dbReference type="UniPathway" id="UPA00028">
    <property type="reaction ID" value="UER00005"/>
</dbReference>
<dbReference type="Proteomes" id="UP000002214">
    <property type="component" value="Chromosome"/>
</dbReference>
<dbReference type="GO" id="GO:0005829">
    <property type="term" value="C:cytosol"/>
    <property type="evidence" value="ECO:0007669"/>
    <property type="project" value="TreeGrafter"/>
</dbReference>
<dbReference type="GO" id="GO:0005524">
    <property type="term" value="F:ATP binding"/>
    <property type="evidence" value="ECO:0007669"/>
    <property type="project" value="UniProtKB-KW"/>
</dbReference>
<dbReference type="GO" id="GO:0004592">
    <property type="term" value="F:pantoate-beta-alanine ligase activity"/>
    <property type="evidence" value="ECO:0007669"/>
    <property type="project" value="UniProtKB-UniRule"/>
</dbReference>
<dbReference type="GO" id="GO:0015940">
    <property type="term" value="P:pantothenate biosynthetic process"/>
    <property type="evidence" value="ECO:0007669"/>
    <property type="project" value="UniProtKB-UniRule"/>
</dbReference>
<dbReference type="CDD" id="cd00560">
    <property type="entry name" value="PanC"/>
    <property type="match status" value="1"/>
</dbReference>
<dbReference type="FunFam" id="3.30.1300.10:FF:000001">
    <property type="entry name" value="Pantothenate synthetase"/>
    <property type="match status" value="1"/>
</dbReference>
<dbReference type="FunFam" id="3.40.50.620:FF:000013">
    <property type="entry name" value="Pantothenate synthetase"/>
    <property type="match status" value="1"/>
</dbReference>
<dbReference type="Gene3D" id="3.40.50.620">
    <property type="entry name" value="HUPs"/>
    <property type="match status" value="1"/>
</dbReference>
<dbReference type="Gene3D" id="3.30.1300.10">
    <property type="entry name" value="Pantoate-beta-alanine ligase, C-terminal domain"/>
    <property type="match status" value="1"/>
</dbReference>
<dbReference type="HAMAP" id="MF_00158">
    <property type="entry name" value="PanC"/>
    <property type="match status" value="1"/>
</dbReference>
<dbReference type="InterPro" id="IPR004821">
    <property type="entry name" value="Cyt_trans-like"/>
</dbReference>
<dbReference type="InterPro" id="IPR003721">
    <property type="entry name" value="Pantoate_ligase"/>
</dbReference>
<dbReference type="InterPro" id="IPR042176">
    <property type="entry name" value="Pantoate_ligase_C"/>
</dbReference>
<dbReference type="InterPro" id="IPR014729">
    <property type="entry name" value="Rossmann-like_a/b/a_fold"/>
</dbReference>
<dbReference type="NCBIfam" id="TIGR00125">
    <property type="entry name" value="cyt_tran_rel"/>
    <property type="match status" value="1"/>
</dbReference>
<dbReference type="NCBIfam" id="TIGR00018">
    <property type="entry name" value="panC"/>
    <property type="match status" value="1"/>
</dbReference>
<dbReference type="PANTHER" id="PTHR21299">
    <property type="entry name" value="CYTIDYLATE KINASE/PANTOATE-BETA-ALANINE LIGASE"/>
    <property type="match status" value="1"/>
</dbReference>
<dbReference type="PANTHER" id="PTHR21299:SF1">
    <property type="entry name" value="PANTOATE--BETA-ALANINE LIGASE"/>
    <property type="match status" value="1"/>
</dbReference>
<dbReference type="Pfam" id="PF02569">
    <property type="entry name" value="Pantoate_ligase"/>
    <property type="match status" value="1"/>
</dbReference>
<dbReference type="SUPFAM" id="SSF52374">
    <property type="entry name" value="Nucleotidylyl transferase"/>
    <property type="match status" value="1"/>
</dbReference>